<organism>
    <name type="scientific">Human cytomegalovirus (strain AD169)</name>
    <name type="common">HHV-5</name>
    <name type="synonym">Human herpesvirus 5</name>
    <dbReference type="NCBI Taxonomy" id="10360"/>
    <lineage>
        <taxon>Viruses</taxon>
        <taxon>Duplodnaviria</taxon>
        <taxon>Heunggongvirae</taxon>
        <taxon>Peploviricota</taxon>
        <taxon>Herviviricetes</taxon>
        <taxon>Herpesvirales</taxon>
        <taxon>Orthoherpesviridae</taxon>
        <taxon>Betaherpesvirinae</taxon>
        <taxon>Cytomegalovirus</taxon>
        <taxon>Cytomegalovirus humanbeta5</taxon>
        <taxon>Human cytomegalovirus</taxon>
    </lineage>
</organism>
<accession>P16779</accession>
<accession>Q7M6P5</accession>
<protein>
    <recommendedName>
        <fullName>Apoptosis inhibitor UL38</fullName>
    </recommendedName>
</protein>
<gene>
    <name type="primary">UL38</name>
</gene>
<feature type="chain" id="PRO_0000115320" description="Apoptosis inhibitor UL38">
    <location>
        <begin position="1"/>
        <end position="331"/>
    </location>
</feature>
<feature type="region of interest" description="Disordered" evidence="3">
    <location>
        <begin position="247"/>
        <end position="305"/>
    </location>
</feature>
<feature type="compositionally biased region" description="Low complexity" evidence="3">
    <location>
        <begin position="275"/>
        <end position="304"/>
    </location>
</feature>
<evidence type="ECO:0000250" key="1">
    <source>
        <dbReference type="UniProtKB" id="F5HG98"/>
    </source>
</evidence>
<evidence type="ECO:0000250" key="2">
    <source>
        <dbReference type="UniProtKB" id="Q9WT45"/>
    </source>
</evidence>
<evidence type="ECO:0000256" key="3">
    <source>
        <dbReference type="SAM" id="MobiDB-lite"/>
    </source>
</evidence>
<evidence type="ECO:0000269" key="4">
    <source>
    </source>
</evidence>
<sequence length="331" mass="36737">MTTTTHSTAAIMSLLDEAEWRQTQMDVGGLIQASALGKVALRYAVRKLMKRGARLRHDSGLYVCICDPSYEFLQMNLSKISWLERHCPPLDQELIMFGVIEAWEEASVRPTRQLVLFMTPKWDVFAYDSGILFFLAPSMAQFWHGAIVLEYWNALFPVEVRSHVRQHAHTMDDLVMVFHQLDYEKQVLEARRDKNTEGPRTFAKSVNSYVRAILESERRIREGKIPMTFVDRDSLRANSLAHIQATGAQPSHAPAQRVLSAPPSLPLPVSEEDPAAAATPSSSAATTPPSSVVPASVESELSSSPPLPPVVVKDVVYTAGEGDVVQMVVVV</sequence>
<proteinExistence type="inferred from homology"/>
<keyword id="KW-1035">Host cytoplasm</keyword>
<keyword id="KW-1048">Host nucleus</keyword>
<keyword id="KW-0945">Host-virus interaction</keyword>
<keyword id="KW-1119">Modulation of host cell apoptosis by virus</keyword>
<keyword id="KW-1185">Reference proteome</keyword>
<comment type="function">
    <text evidence="1 2 4">Plays a role in the inhibition of host apoptosis to facilitate efficient viral replication. Promotes stabilization and inactivation of host TP53 through interaction with host MDM2 (By similarity). Induces host mTORC1 activation by antagonizing the ability of host TSC1/2 to negatively regulate mTORC1. Thus, inhibits a growth regulatory pathway to facilitate viral replication. Prevents premature cell host cell death by blocking host ubiquitin-specific protease 24/USP24-mediated autophagic ferritin degradation in lysosomes thus maintaining lysosome integrity and cellular viability (By similarity). Involved in the activation of host ENO2 leading to enhanced glycolysis and UDP-sugar metabolism in order to enable the expression of viral glycoproteins (PubMed:36459650).</text>
</comment>
<comment type="subunit">
    <text evidence="1 2">Interacts with host MDM2; this interaction leads to the stabilization of host TP53 (By similarity). Interacts with host TSC2; this interaction prevents host cell stress responses (By similarity).</text>
</comment>
<comment type="subcellular location">
    <subcellularLocation>
        <location evidence="1">Host cytoplasm</location>
    </subcellularLocation>
    <subcellularLocation>
        <location evidence="1">Host nucleus</location>
    </subcellularLocation>
    <text evidence="1">localized in the host nucleus at early times postinfection and then increases in both nuclear and cytoplasmic compartments during the course of infection.</text>
</comment>
<comment type="similarity">
    <text>Belongs to the beta-herpesvirinae UL38 protein family.</text>
</comment>
<name>UL38_HCMVA</name>
<reference key="1">
    <citation type="journal article" date="1990" name="Curr. Top. Microbiol. Immunol.">
        <title>Analysis of the protein-coding content of the sequence of human cytomegalovirus strain AD169.</title>
        <authorList>
            <person name="Chee M.S."/>
            <person name="Bankier A.T."/>
            <person name="Beck S."/>
            <person name="Bohni R."/>
            <person name="Brown C.M."/>
            <person name="Cerny R."/>
            <person name="Horsnell T."/>
            <person name="Hutchison C.A. III"/>
            <person name="Kouzarides T."/>
            <person name="Martignetti J.A."/>
            <person name="Preddie E."/>
            <person name="Satchwell S.C."/>
            <person name="Tomlinson P."/>
            <person name="Weston K.M."/>
            <person name="Barrell B.G."/>
        </authorList>
    </citation>
    <scope>NUCLEOTIDE SEQUENCE [LARGE SCALE GENOMIC DNA]</scope>
</reference>
<reference key="2">
    <citation type="journal article" date="2003" name="J. Gen. Virol.">
        <title>The human cytomegalovirus genome revisited: comparison with the chimpanzee cytomegalovirus genome.</title>
        <authorList>
            <person name="Davison A.J."/>
            <person name="Dolan A."/>
            <person name="Akter P."/>
            <person name="Addison C."/>
            <person name="Dargan D.J."/>
            <person name="Alcendor D.J."/>
            <person name="McGeoch D.J."/>
            <person name="Hayward G.S."/>
        </authorList>
    </citation>
    <scope>GENOME REANNOTATION</scope>
</reference>
<reference key="3">
    <citation type="journal article" date="2003" name="J. Gen. Virol.">
        <authorList>
            <person name="Davison A.J."/>
            <person name="Dolan A."/>
            <person name="Akter P."/>
            <person name="Addison C."/>
            <person name="Dargan D.J."/>
            <person name="Alcendor D.J."/>
            <person name="McGeoch D.J."/>
            <person name="Hayward G.S."/>
        </authorList>
    </citation>
    <scope>ERRATUM OF PUBMED:12533697</scope>
</reference>
<reference key="4">
    <citation type="journal article" date="2004" name="J. Virol.">
        <title>Identification of proteins in human cytomegalovirus (HCMV) particles: the HCMV proteome.</title>
        <authorList>
            <person name="Varnum S.M."/>
            <person name="Streblow D.N."/>
            <person name="Monroe M.E."/>
            <person name="Smith P."/>
            <person name="Auberry K.J."/>
            <person name="Pasa-Tolic L."/>
            <person name="Wang D."/>
            <person name="Camp D.G. II"/>
            <person name="Rodland K."/>
            <person name="Wiley S."/>
            <person name="Britt W."/>
            <person name="Shenk T."/>
            <person name="Smith R.D."/>
            <person name="Nelson J.A."/>
        </authorList>
    </citation>
    <scope>IDENTIFICATION</scope>
</reference>
<reference key="5">
    <citation type="journal article" date="2004" name="J. Virol.">
        <authorList>
            <person name="Varnum S.M."/>
            <person name="Streblow D.N."/>
            <person name="Monroe M.E."/>
            <person name="Smith P."/>
            <person name="Auberry K.J."/>
            <person name="Pasa-Tolic L."/>
            <person name="Wang D."/>
            <person name="Camp D.G. II"/>
            <person name="Rodland K."/>
            <person name="Wiley S."/>
            <person name="Britt W."/>
            <person name="Shenk T."/>
            <person name="Smith R.D."/>
            <person name="Nelson J.A."/>
        </authorList>
    </citation>
    <scope>ERRATUM OF PUBMED:15452216</scope>
</reference>
<reference key="6">
    <citation type="journal article" date="2022" name="Proc. Natl. Acad. Sci. U.S.A.">
        <title>Human cytomegalovirus induces neuronal enolase to support virally mediated metabolic remodeling.</title>
        <authorList>
            <person name="Moreno I. Jr."/>
            <person name="Rodriguez-Sanchez I."/>
            <person name="Schafer X."/>
            <person name="Munger J."/>
        </authorList>
    </citation>
    <scope>FUNCTION</scope>
</reference>
<organismHost>
    <name type="scientific">Homo sapiens</name>
    <name type="common">Human</name>
    <dbReference type="NCBI Taxonomy" id="9606"/>
</organismHost>
<dbReference type="EMBL" id="X17403">
    <property type="protein sequence ID" value="CAA35397.1"/>
    <property type="molecule type" value="Genomic_DNA"/>
</dbReference>
<dbReference type="EMBL" id="BK000394">
    <property type="protein sequence ID" value="DAA00143.1"/>
    <property type="molecule type" value="Genomic_DNA"/>
</dbReference>
<dbReference type="PIR" id="S09800">
    <property type="entry name" value="S09800"/>
</dbReference>
<dbReference type="Proteomes" id="UP000008991">
    <property type="component" value="Segment"/>
</dbReference>
<dbReference type="Proteomes" id="UP000008992">
    <property type="component" value="Segment"/>
</dbReference>
<dbReference type="GO" id="GO:0030430">
    <property type="term" value="C:host cell cytoplasm"/>
    <property type="evidence" value="ECO:0007669"/>
    <property type="project" value="UniProtKB-SubCell"/>
</dbReference>
<dbReference type="GO" id="GO:0042025">
    <property type="term" value="C:host cell nucleus"/>
    <property type="evidence" value="ECO:0007669"/>
    <property type="project" value="UniProtKB-SubCell"/>
</dbReference>
<dbReference type="GO" id="GO:0052150">
    <property type="term" value="P:symbiont-mediated perturbation of host apoptosis"/>
    <property type="evidence" value="ECO:0007669"/>
    <property type="project" value="UniProtKB-KW"/>
</dbReference>
<dbReference type="InterPro" id="IPR003360">
    <property type="entry name" value="US22-like"/>
</dbReference>
<dbReference type="Pfam" id="PF02393">
    <property type="entry name" value="US22"/>
    <property type="match status" value="1"/>
</dbReference>